<reference key="1">
    <citation type="journal article" date="1991" name="J. Immunol.">
        <title>Mouse IL-1 receptor antagonist protein. Molecular characterization, gene mapping, and expression of mRNA in vitro and in vivo.</title>
        <authorList>
            <person name="Zahedi K."/>
            <person name="Seldin M.F."/>
            <person name="Rits M."/>
            <person name="Ezekowitz R.A."/>
            <person name="Whitehead A.S."/>
        </authorList>
    </citation>
    <scope>NUCLEOTIDE SEQUENCE (ISOFORM 1)</scope>
</reference>
<reference key="2">
    <citation type="journal article" date="1991" name="Blood">
        <title>Cloning and expression of murine interleukin-1 receptor antagonist in macrophages stimulated by colony-stimulating factor 1.</title>
        <authorList>
            <person name="Matsushime H."/>
            <person name="Roussel M.F."/>
            <person name="Matsushima K."/>
            <person name="Hishinuma A."/>
            <person name="Sherr C.J."/>
        </authorList>
    </citation>
    <scope>NUCLEOTIDE SEQUENCE [MRNA] (ISOFORM 1)</scope>
</reference>
<reference key="3">
    <citation type="journal article" date="1994" name="Cytokine">
        <title>The mouse interleukin 1 receptor antagonist protein: gene structure and regulation in vitro.</title>
        <authorList>
            <person name="Zahedi K.A."/>
            <person name="Uhlar C.M."/>
            <person name="Rits M."/>
            <person name="Prada A.E."/>
            <person name="Whitehead A.S."/>
        </authorList>
    </citation>
    <scope>NUCLEOTIDE SEQUENCE [GENOMIC DNA] (ISOFORM 1)</scope>
    <source>
        <strain>SWR/J</strain>
    </source>
</reference>
<reference key="4">
    <citation type="journal article" date="1997" name="J. Immunol.">
        <title>Mouse IL-1 receptor antagonist isoforms: complementary DNA cloning and protein expression of intracellular isoform and tissue distribution of secreted and intracellular IL-1 receptor antagonist in vivo.</title>
        <authorList>
            <person name="Gabay C."/>
            <person name="Porter B."/>
            <person name="Fantuzzi G."/>
            <person name="Arend W.P."/>
        </authorList>
    </citation>
    <scope>NUCLEOTIDE SEQUENCE [MRNA] (ISOFORM 2)</scope>
    <source>
        <strain>FVB X DBA/1 LACJ</strain>
    </source>
</reference>
<reference key="5">
    <citation type="journal article" date="1991" name="Proc. Natl. Acad. Sci. U.S.A.">
        <title>Interleukin 1 receptor antagonist is a member of the interleukin 1 gene family: evolution of a cytokine control mechanism.</title>
        <authorList>
            <person name="Eisenberg S.P."/>
            <person name="Brewer M.T."/>
            <person name="Verderber E."/>
            <person name="Heimdal P."/>
            <person name="Brandhuber B.J."/>
            <person name="Thompson R.C."/>
        </authorList>
    </citation>
    <scope>NUCLEOTIDE SEQUENCE [GENOMIC DNA] OF 7-178</scope>
</reference>
<reference key="6">
    <citation type="journal article" date="1991" name="Eur. J. Immunol.">
        <title>Cloning, heterologous expression and characterization of murine interleukin 1 receptor antagonist protein.</title>
        <authorList>
            <person name="Shuck M.E."/>
            <person name="Eessalu T.E."/>
            <person name="Tracey D.E."/>
            <person name="Bienkowski M.J."/>
        </authorList>
    </citation>
    <scope>NUCLEOTIDE SEQUENCE OF 23-178</scope>
</reference>
<reference key="7">
    <citation type="journal article" date="2019" name="Nat. Microbiol.">
        <title>Type I interferon-driven susceptibility to Mycobacterium tuberculosis is mediated by IL-1Ra.</title>
        <authorList>
            <person name="Ji D.X."/>
            <person name="Yamashiro L.H."/>
            <person name="Chen K.J."/>
            <person name="Mukaida N."/>
            <person name="Kramnik I."/>
            <person name="Darwin K.H."/>
            <person name="Vance R.E."/>
        </authorList>
    </citation>
    <scope>FUNCTION</scope>
</reference>
<reference key="8">
    <citation type="journal article" date="2022" name="Nat. Immunol.">
        <title>IL-1 and IL-1ra are key regulators of the inflammatory response to RNA vaccines.</title>
        <authorList>
            <person name="Tahtinen S."/>
            <person name="Tong A.J."/>
            <person name="Himmels P."/>
            <person name="Oh J."/>
            <person name="Paler-Martinez A."/>
            <person name="Kim L."/>
            <person name="Wichner S."/>
            <person name="Oei Y."/>
            <person name="McCarron M.J."/>
            <person name="Freund E.C."/>
            <person name="Amir Z.A."/>
            <person name="de la Cruz C.C."/>
            <person name="Haley B."/>
            <person name="Blanchette C."/>
            <person name="Schartner J.M."/>
            <person name="Ye W."/>
            <person name="Yadav M."/>
            <person name="Sahin U."/>
            <person name="Delamarre L."/>
            <person name="Mellman I."/>
        </authorList>
    </citation>
    <scope>FUNCTION</scope>
    <scope>DISRUPTION PHENOTYPE</scope>
</reference>
<accession>P25085</accession>
<accession>O70207</accession>
<dbReference type="EMBL" id="M74294">
    <property type="protein sequence ID" value="AAA39309.1"/>
    <property type="molecule type" value="mRNA"/>
</dbReference>
<dbReference type="EMBL" id="M64404">
    <property type="protein sequence ID" value="AAA39277.1"/>
    <property type="molecule type" value="mRNA"/>
</dbReference>
<dbReference type="EMBL" id="L32838">
    <property type="protein sequence ID" value="AAA20576.1"/>
    <property type="molecule type" value="Genomic_DNA"/>
</dbReference>
<dbReference type="EMBL" id="AF001795">
    <property type="protein sequence ID" value="AAC15251.1"/>
    <property type="molecule type" value="mRNA"/>
</dbReference>
<dbReference type="EMBL" id="M57525">
    <property type="protein sequence ID" value="AAA39278.1"/>
    <property type="molecule type" value="mRNA"/>
</dbReference>
<dbReference type="EMBL" id="M63100">
    <property type="protein sequence ID" value="AAA39310.1"/>
    <property type="molecule type" value="Genomic_DNA"/>
</dbReference>
<dbReference type="EMBL" id="S64082">
    <property type="protein sequence ID" value="AAB20265.1"/>
    <property type="molecule type" value="mRNA"/>
</dbReference>
<dbReference type="CCDS" id="CCDS15736.1">
    <molecule id="P25085-2"/>
</dbReference>
<dbReference type="CCDS" id="CCDS38064.1">
    <molecule id="P25085-1"/>
</dbReference>
<dbReference type="PIR" id="A44610">
    <property type="entry name" value="A44610"/>
</dbReference>
<dbReference type="RefSeq" id="NP_001034790.1">
    <molecule id="P25085-1"/>
    <property type="nucleotide sequence ID" value="NM_001039701.3"/>
</dbReference>
<dbReference type="RefSeq" id="NP_112444.1">
    <molecule id="P25085-2"/>
    <property type="nucleotide sequence ID" value="NM_031167.5"/>
</dbReference>
<dbReference type="SMR" id="P25085"/>
<dbReference type="FunCoup" id="P25085">
    <property type="interactions" value="328"/>
</dbReference>
<dbReference type="STRING" id="10090.ENSMUSP00000110126"/>
<dbReference type="BindingDB" id="P25085"/>
<dbReference type="ChEMBL" id="CHEMBL3414413"/>
<dbReference type="GlyCosmos" id="P25085">
    <property type="glycosylation" value="1 site, No reported glycans"/>
</dbReference>
<dbReference type="GlyGen" id="P25085">
    <property type="glycosylation" value="2 sites, 1 O-linked glycan (1 site)"/>
</dbReference>
<dbReference type="iPTMnet" id="P25085"/>
<dbReference type="PhosphoSitePlus" id="P25085"/>
<dbReference type="SwissPalm" id="P25085"/>
<dbReference type="PaxDb" id="10090-ENSMUSP00000110126"/>
<dbReference type="PeptideAtlas" id="P25085"/>
<dbReference type="ProteomicsDB" id="267318">
    <molecule id="P25085-1"/>
</dbReference>
<dbReference type="ProteomicsDB" id="267319">
    <molecule id="P25085-2"/>
</dbReference>
<dbReference type="Antibodypedia" id="806">
    <property type="antibodies" value="926 antibodies from 42 providers"/>
</dbReference>
<dbReference type="DNASU" id="16181"/>
<dbReference type="Ensembl" id="ENSMUST00000114482.3">
    <molecule id="P25085-1"/>
    <property type="protein sequence ID" value="ENSMUSP00000110126.2"/>
    <property type="gene ID" value="ENSMUSG00000026981.16"/>
</dbReference>
<dbReference type="Ensembl" id="ENSMUST00000114487.9">
    <molecule id="P25085-2"/>
    <property type="protein sequence ID" value="ENSMUSP00000110131.3"/>
    <property type="gene ID" value="ENSMUSG00000026981.16"/>
</dbReference>
<dbReference type="GeneID" id="16181"/>
<dbReference type="KEGG" id="mmu:16181"/>
<dbReference type="UCSC" id="uc008iox.2">
    <molecule id="P25085-1"/>
    <property type="organism name" value="mouse"/>
</dbReference>
<dbReference type="AGR" id="MGI:96547"/>
<dbReference type="CTD" id="3557"/>
<dbReference type="MGI" id="MGI:96547">
    <property type="gene designation" value="Il1rn"/>
</dbReference>
<dbReference type="VEuPathDB" id="HostDB:ENSMUSG00000026981"/>
<dbReference type="eggNOG" id="ENOG502S5F0">
    <property type="taxonomic scope" value="Eukaryota"/>
</dbReference>
<dbReference type="GeneTree" id="ENSGT00950000182943"/>
<dbReference type="HOGENOM" id="CLU_095373_2_0_1"/>
<dbReference type="InParanoid" id="P25085"/>
<dbReference type="OMA" id="WYLCTAL"/>
<dbReference type="OrthoDB" id="9274793at2759"/>
<dbReference type="PhylomeDB" id="P25085"/>
<dbReference type="TreeFam" id="TF300203"/>
<dbReference type="Reactome" id="R-MMU-9020702">
    <property type="pathway name" value="Interleukin-1 signaling"/>
</dbReference>
<dbReference type="BioGRID-ORCS" id="16181">
    <property type="hits" value="4 hits in 78 CRISPR screens"/>
</dbReference>
<dbReference type="PRO" id="PR:P25085"/>
<dbReference type="Proteomes" id="UP000000589">
    <property type="component" value="Chromosome 2"/>
</dbReference>
<dbReference type="RNAct" id="P25085">
    <property type="molecule type" value="protein"/>
</dbReference>
<dbReference type="Bgee" id="ENSMUSG00000026981">
    <property type="expression patterns" value="Expressed in granulocyte and 62 other cell types or tissues"/>
</dbReference>
<dbReference type="ExpressionAtlas" id="P25085">
    <property type="expression patterns" value="baseline and differential"/>
</dbReference>
<dbReference type="GO" id="GO:0005813">
    <property type="term" value="C:centrosome"/>
    <property type="evidence" value="ECO:0007669"/>
    <property type="project" value="Ensembl"/>
</dbReference>
<dbReference type="GO" id="GO:0005829">
    <property type="term" value="C:cytosol"/>
    <property type="evidence" value="ECO:0007669"/>
    <property type="project" value="Ensembl"/>
</dbReference>
<dbReference type="GO" id="GO:0005576">
    <property type="term" value="C:extracellular region"/>
    <property type="evidence" value="ECO:0000314"/>
    <property type="project" value="MGI"/>
</dbReference>
<dbReference type="GO" id="GO:0005615">
    <property type="term" value="C:extracellular space"/>
    <property type="evidence" value="ECO:0007669"/>
    <property type="project" value="Ensembl"/>
</dbReference>
<dbReference type="GO" id="GO:0005654">
    <property type="term" value="C:nucleoplasm"/>
    <property type="evidence" value="ECO:0007669"/>
    <property type="project" value="Ensembl"/>
</dbReference>
<dbReference type="GO" id="GO:0031982">
    <property type="term" value="C:vesicle"/>
    <property type="evidence" value="ECO:0000314"/>
    <property type="project" value="MGI"/>
</dbReference>
<dbReference type="GO" id="GO:0005125">
    <property type="term" value="F:cytokine activity"/>
    <property type="evidence" value="ECO:0007669"/>
    <property type="project" value="InterPro"/>
</dbReference>
<dbReference type="GO" id="GO:0045352">
    <property type="term" value="F:interleukin-1 type I receptor antagonist activity"/>
    <property type="evidence" value="ECO:0007669"/>
    <property type="project" value="Ensembl"/>
</dbReference>
<dbReference type="GO" id="GO:0045353">
    <property type="term" value="F:interleukin-1 type II receptor antagonist activity"/>
    <property type="evidence" value="ECO:0007669"/>
    <property type="project" value="Ensembl"/>
</dbReference>
<dbReference type="GO" id="GO:0005150">
    <property type="term" value="F:interleukin-1, type I receptor binding"/>
    <property type="evidence" value="ECO:0007669"/>
    <property type="project" value="Ensembl"/>
</dbReference>
<dbReference type="GO" id="GO:0005151">
    <property type="term" value="F:interleukin-1, type II receptor binding"/>
    <property type="evidence" value="ECO:0007669"/>
    <property type="project" value="Ensembl"/>
</dbReference>
<dbReference type="GO" id="GO:0006955">
    <property type="term" value="P:immune response"/>
    <property type="evidence" value="ECO:0007669"/>
    <property type="project" value="InterPro"/>
</dbReference>
<dbReference type="GO" id="GO:0006954">
    <property type="term" value="P:inflammatory response"/>
    <property type="evidence" value="ECO:0007669"/>
    <property type="project" value="InterPro"/>
</dbReference>
<dbReference type="GO" id="GO:0030073">
    <property type="term" value="P:insulin secretion"/>
    <property type="evidence" value="ECO:0000315"/>
    <property type="project" value="MGI"/>
</dbReference>
<dbReference type="GO" id="GO:0006629">
    <property type="term" value="P:lipid metabolic process"/>
    <property type="evidence" value="ECO:0000315"/>
    <property type="project" value="MGI"/>
</dbReference>
<dbReference type="GO" id="GO:0034115">
    <property type="term" value="P:negative regulation of heterotypic cell-cell adhesion"/>
    <property type="evidence" value="ECO:0007669"/>
    <property type="project" value="Ensembl"/>
</dbReference>
<dbReference type="GO" id="GO:2000660">
    <property type="term" value="P:negative regulation of interleukin-1-mediated signaling pathway"/>
    <property type="evidence" value="ECO:0007669"/>
    <property type="project" value="Ensembl"/>
</dbReference>
<dbReference type="GO" id="GO:0051384">
    <property type="term" value="P:response to glucocorticoid"/>
    <property type="evidence" value="ECO:0007669"/>
    <property type="project" value="Ensembl"/>
</dbReference>
<dbReference type="FunFam" id="2.80.10.50:FF:000013">
    <property type="entry name" value="Interleukin-1"/>
    <property type="match status" value="1"/>
</dbReference>
<dbReference type="Gene3D" id="2.80.10.50">
    <property type="match status" value="1"/>
</dbReference>
<dbReference type="InterPro" id="IPR020877">
    <property type="entry name" value="IL-1_CS"/>
</dbReference>
<dbReference type="InterPro" id="IPR000975">
    <property type="entry name" value="IL-1_fam"/>
</dbReference>
<dbReference type="InterPro" id="IPR003297">
    <property type="entry name" value="IL-1RA/IL-36"/>
</dbReference>
<dbReference type="InterPro" id="IPR008996">
    <property type="entry name" value="IL1/FGF"/>
</dbReference>
<dbReference type="PANTHER" id="PTHR10078">
    <property type="entry name" value="INTERLEUKIN-1 FAMILY MEMBER"/>
    <property type="match status" value="1"/>
</dbReference>
<dbReference type="PANTHER" id="PTHR10078:SF28">
    <property type="entry name" value="INTERLEUKIN-1 RECEPTOR ANTAGONIST PROTEIN"/>
    <property type="match status" value="1"/>
</dbReference>
<dbReference type="Pfam" id="PF00340">
    <property type="entry name" value="IL1"/>
    <property type="match status" value="1"/>
</dbReference>
<dbReference type="PRINTS" id="PR00264">
    <property type="entry name" value="INTERLEUKIN1"/>
</dbReference>
<dbReference type="PRINTS" id="PR01360">
    <property type="entry name" value="INTRLEUKIN1X"/>
</dbReference>
<dbReference type="SMART" id="SM00125">
    <property type="entry name" value="IL1"/>
    <property type="match status" value="1"/>
</dbReference>
<dbReference type="SUPFAM" id="SSF50353">
    <property type="entry name" value="Cytokine"/>
    <property type="match status" value="1"/>
</dbReference>
<dbReference type="PROSITE" id="PS00253">
    <property type="entry name" value="INTERLEUKIN_1"/>
    <property type="match status" value="1"/>
</dbReference>
<proteinExistence type="evidence at transcript level"/>
<sequence>MEICWGPYSHLISLLLILLFHSEAACRPSGKRPCKMQAFRIWDTNQKTFYLRNNQLIAGYLQGPNIKLEEKIDMVPIDLHSVFLGIHGGKLCLSCAKSGDDIKLQLEEVNITDLSKNKEEDKRFTFIRSEKGPTTSFESAACPGWFLCTTLEADRPVSLTNTPEEPLIVTKFYFQEDQ</sequence>
<feature type="signal peptide" evidence="1">
    <location>
        <begin position="1"/>
        <end position="26"/>
    </location>
</feature>
<feature type="chain" id="PRO_0000015330" description="Interleukin-1 receptor antagonist protein">
    <location>
        <begin position="27"/>
        <end position="178"/>
    </location>
</feature>
<feature type="glycosylation site" description="N-linked (GlcNAc...) asparagine" evidence="3">
    <location>
        <position position="110"/>
    </location>
</feature>
<feature type="disulfide bond" evidence="1">
    <location>
        <begin position="92"/>
        <end position="142"/>
    </location>
</feature>
<feature type="splice variant" id="VSP_002652" description="In isoform 2." evidence="6">
    <original>MEICWGPYSHLISLLLILLFH</original>
    <variation>MA</variation>
    <location>
        <begin position="1"/>
        <end position="21"/>
    </location>
</feature>
<comment type="function">
    <text evidence="4 5">Anti-inflammatory antagonist of interleukin-1 family of proinflammatory cytokines such as interleukin-1beta/IL1B and interleukin-1alpha/IL1A. Protects from immune dysregulation and uncontrolled systemic inflammation triggered by IL1 for a range of innate stimulatory agents such as pathogens.</text>
</comment>
<comment type="subcellular location">
    <molecule>Isoform 1</molecule>
    <subcellularLocation>
        <location evidence="2">Secreted</location>
    </subcellularLocation>
</comment>
<comment type="subcellular location">
    <molecule>Isoform 2</molecule>
    <subcellularLocation>
        <location>Cytoplasm</location>
    </subcellularLocation>
</comment>
<comment type="alternative products">
    <event type="alternative splicing"/>
    <isoform>
        <id>P25085-1</id>
        <name>1</name>
        <sequence type="displayed"/>
    </isoform>
    <isoform>
        <id>P25085-2</id>
        <name>2</name>
        <sequence type="described" ref="VSP_002652"/>
    </isoform>
</comment>
<comment type="disruption phenotype">
    <text evidence="5">Deficient mice still possess other negative regulators of IL1 activity and adapt to excessive IL1 via shedding of IL1R1.</text>
</comment>
<comment type="similarity">
    <text evidence="7">Belongs to the IL-1 family.</text>
</comment>
<keyword id="KW-0025">Alternative splicing</keyword>
<keyword id="KW-0963">Cytoplasm</keyword>
<keyword id="KW-1015">Disulfide bond</keyword>
<keyword id="KW-0325">Glycoprotein</keyword>
<keyword id="KW-1185">Reference proteome</keyword>
<keyword id="KW-0964">Secreted</keyword>
<keyword id="KW-0732">Signal</keyword>
<name>IL1RA_MOUSE</name>
<protein>
    <recommendedName>
        <fullName>Interleukin-1 receptor antagonist protein</fullName>
        <shortName>IL-1RN</shortName>
        <shortName>IL-1ra</shortName>
        <shortName>IRAP</shortName>
    </recommendedName>
    <alternativeName>
        <fullName>IL1 inhibitor</fullName>
    </alternativeName>
</protein>
<gene>
    <name type="primary">Il1rn</name>
    <name type="synonym">Il-1ra</name>
</gene>
<evidence type="ECO:0000250" key="1"/>
<evidence type="ECO:0000250" key="2">
    <source>
        <dbReference type="UniProtKB" id="P18510"/>
    </source>
</evidence>
<evidence type="ECO:0000255" key="3"/>
<evidence type="ECO:0000269" key="4">
    <source>
    </source>
</evidence>
<evidence type="ECO:0000269" key="5">
    <source>
    </source>
</evidence>
<evidence type="ECO:0000303" key="6">
    <source>
    </source>
</evidence>
<evidence type="ECO:0000305" key="7"/>
<organism>
    <name type="scientific">Mus musculus</name>
    <name type="common">Mouse</name>
    <dbReference type="NCBI Taxonomy" id="10090"/>
    <lineage>
        <taxon>Eukaryota</taxon>
        <taxon>Metazoa</taxon>
        <taxon>Chordata</taxon>
        <taxon>Craniata</taxon>
        <taxon>Vertebrata</taxon>
        <taxon>Euteleostomi</taxon>
        <taxon>Mammalia</taxon>
        <taxon>Eutheria</taxon>
        <taxon>Euarchontoglires</taxon>
        <taxon>Glires</taxon>
        <taxon>Rodentia</taxon>
        <taxon>Myomorpha</taxon>
        <taxon>Muroidea</taxon>
        <taxon>Muridae</taxon>
        <taxon>Murinae</taxon>
        <taxon>Mus</taxon>
        <taxon>Mus</taxon>
    </lineage>
</organism>